<feature type="chain" id="PRO_1000065321" description="Acetyl-coenzyme A synthetase">
    <location>
        <begin position="1"/>
        <end position="650"/>
    </location>
</feature>
<feature type="binding site" evidence="1">
    <location>
        <begin position="191"/>
        <end position="194"/>
    </location>
    <ligand>
        <name>CoA</name>
        <dbReference type="ChEBI" id="CHEBI:57287"/>
    </ligand>
</feature>
<feature type="binding site" evidence="1">
    <location>
        <position position="311"/>
    </location>
    <ligand>
        <name>CoA</name>
        <dbReference type="ChEBI" id="CHEBI:57287"/>
    </ligand>
</feature>
<feature type="binding site" evidence="1">
    <location>
        <position position="335"/>
    </location>
    <ligand>
        <name>CoA</name>
        <dbReference type="ChEBI" id="CHEBI:57287"/>
    </ligand>
</feature>
<feature type="binding site" evidence="1">
    <location>
        <begin position="387"/>
        <end position="389"/>
    </location>
    <ligand>
        <name>ATP</name>
        <dbReference type="ChEBI" id="CHEBI:30616"/>
    </ligand>
</feature>
<feature type="binding site" evidence="1">
    <location>
        <begin position="411"/>
        <end position="416"/>
    </location>
    <ligand>
        <name>ATP</name>
        <dbReference type="ChEBI" id="CHEBI:30616"/>
    </ligand>
</feature>
<feature type="binding site" evidence="1">
    <location>
        <position position="500"/>
    </location>
    <ligand>
        <name>ATP</name>
        <dbReference type="ChEBI" id="CHEBI:30616"/>
    </ligand>
</feature>
<feature type="binding site" evidence="1">
    <location>
        <position position="515"/>
    </location>
    <ligand>
        <name>ATP</name>
        <dbReference type="ChEBI" id="CHEBI:30616"/>
    </ligand>
</feature>
<feature type="binding site" evidence="1">
    <location>
        <position position="523"/>
    </location>
    <ligand>
        <name>CoA</name>
        <dbReference type="ChEBI" id="CHEBI:57287"/>
    </ligand>
</feature>
<feature type="binding site" evidence="1">
    <location>
        <position position="526"/>
    </location>
    <ligand>
        <name>ATP</name>
        <dbReference type="ChEBI" id="CHEBI:30616"/>
    </ligand>
</feature>
<feature type="binding site" evidence="1">
    <location>
        <position position="537"/>
    </location>
    <ligand>
        <name>Mg(2+)</name>
        <dbReference type="ChEBI" id="CHEBI:18420"/>
    </ligand>
</feature>
<feature type="binding site" evidence="1">
    <location>
        <position position="539"/>
    </location>
    <ligand>
        <name>Mg(2+)</name>
        <dbReference type="ChEBI" id="CHEBI:18420"/>
    </ligand>
</feature>
<feature type="binding site" evidence="1">
    <location>
        <position position="542"/>
    </location>
    <ligand>
        <name>Mg(2+)</name>
        <dbReference type="ChEBI" id="CHEBI:18420"/>
    </ligand>
</feature>
<feature type="binding site" evidence="1">
    <location>
        <position position="584"/>
    </location>
    <ligand>
        <name>CoA</name>
        <dbReference type="ChEBI" id="CHEBI:57287"/>
    </ligand>
</feature>
<feature type="modified residue" description="N6-acetyllysine" evidence="1">
    <location>
        <position position="609"/>
    </location>
</feature>
<protein>
    <recommendedName>
        <fullName evidence="1">Acetyl-coenzyme A synthetase</fullName>
        <shortName evidence="1">AcCoA synthetase</shortName>
        <shortName evidence="1">Acs</shortName>
        <ecNumber evidence="1">6.2.1.1</ecNumber>
    </recommendedName>
    <alternativeName>
        <fullName evidence="1">Acetate--CoA ligase</fullName>
    </alternativeName>
    <alternativeName>
        <fullName evidence="1">Acyl-activating enzyme</fullName>
    </alternativeName>
</protein>
<keyword id="KW-0007">Acetylation</keyword>
<keyword id="KW-0067">ATP-binding</keyword>
<keyword id="KW-0436">Ligase</keyword>
<keyword id="KW-0460">Magnesium</keyword>
<keyword id="KW-0479">Metal-binding</keyword>
<keyword id="KW-0547">Nucleotide-binding</keyword>
<name>ACSA_SHEPC</name>
<evidence type="ECO:0000255" key="1">
    <source>
        <dbReference type="HAMAP-Rule" id="MF_01123"/>
    </source>
</evidence>
<organism>
    <name type="scientific">Shewanella putrefaciens (strain CN-32 / ATCC BAA-453)</name>
    <dbReference type="NCBI Taxonomy" id="319224"/>
    <lineage>
        <taxon>Bacteria</taxon>
        <taxon>Pseudomonadati</taxon>
        <taxon>Pseudomonadota</taxon>
        <taxon>Gammaproteobacteria</taxon>
        <taxon>Alteromonadales</taxon>
        <taxon>Shewanellaceae</taxon>
        <taxon>Shewanella</taxon>
    </lineage>
</organism>
<gene>
    <name evidence="1" type="primary">acsA</name>
    <name type="ordered locus">Sputcn32_2349</name>
</gene>
<dbReference type="EC" id="6.2.1.1" evidence="1"/>
<dbReference type="EMBL" id="CP000681">
    <property type="protein sequence ID" value="ABP76070.1"/>
    <property type="molecule type" value="Genomic_DNA"/>
</dbReference>
<dbReference type="SMR" id="A4Y7Y7"/>
<dbReference type="STRING" id="319224.Sputcn32_2349"/>
<dbReference type="KEGG" id="spc:Sputcn32_2349"/>
<dbReference type="eggNOG" id="COG0365">
    <property type="taxonomic scope" value="Bacteria"/>
</dbReference>
<dbReference type="HOGENOM" id="CLU_000022_3_6_6"/>
<dbReference type="GO" id="GO:0005829">
    <property type="term" value="C:cytosol"/>
    <property type="evidence" value="ECO:0007669"/>
    <property type="project" value="TreeGrafter"/>
</dbReference>
<dbReference type="GO" id="GO:0003987">
    <property type="term" value="F:acetate-CoA ligase activity"/>
    <property type="evidence" value="ECO:0007669"/>
    <property type="project" value="UniProtKB-UniRule"/>
</dbReference>
<dbReference type="GO" id="GO:0016208">
    <property type="term" value="F:AMP binding"/>
    <property type="evidence" value="ECO:0007669"/>
    <property type="project" value="InterPro"/>
</dbReference>
<dbReference type="GO" id="GO:0005524">
    <property type="term" value="F:ATP binding"/>
    <property type="evidence" value="ECO:0007669"/>
    <property type="project" value="UniProtKB-KW"/>
</dbReference>
<dbReference type="GO" id="GO:0046872">
    <property type="term" value="F:metal ion binding"/>
    <property type="evidence" value="ECO:0007669"/>
    <property type="project" value="UniProtKB-KW"/>
</dbReference>
<dbReference type="GO" id="GO:0019427">
    <property type="term" value="P:acetyl-CoA biosynthetic process from acetate"/>
    <property type="evidence" value="ECO:0007669"/>
    <property type="project" value="InterPro"/>
</dbReference>
<dbReference type="CDD" id="cd05966">
    <property type="entry name" value="ACS"/>
    <property type="match status" value="1"/>
</dbReference>
<dbReference type="FunFam" id="3.30.300.30:FF:000004">
    <property type="entry name" value="Acetyl-coenzyme A synthetase"/>
    <property type="match status" value="1"/>
</dbReference>
<dbReference type="FunFam" id="3.40.50.12780:FF:000001">
    <property type="entry name" value="Acetyl-coenzyme A synthetase"/>
    <property type="match status" value="1"/>
</dbReference>
<dbReference type="Gene3D" id="3.30.300.30">
    <property type="match status" value="1"/>
</dbReference>
<dbReference type="Gene3D" id="3.40.50.12780">
    <property type="entry name" value="N-terminal domain of ligase-like"/>
    <property type="match status" value="1"/>
</dbReference>
<dbReference type="HAMAP" id="MF_01123">
    <property type="entry name" value="Ac_CoA_synth"/>
    <property type="match status" value="1"/>
</dbReference>
<dbReference type="InterPro" id="IPR011904">
    <property type="entry name" value="Ac_CoA_lig"/>
</dbReference>
<dbReference type="InterPro" id="IPR032387">
    <property type="entry name" value="ACAS_N"/>
</dbReference>
<dbReference type="InterPro" id="IPR025110">
    <property type="entry name" value="AMP-bd_C"/>
</dbReference>
<dbReference type="InterPro" id="IPR045851">
    <property type="entry name" value="AMP-bd_C_sf"/>
</dbReference>
<dbReference type="InterPro" id="IPR020845">
    <property type="entry name" value="AMP-binding_CS"/>
</dbReference>
<dbReference type="InterPro" id="IPR000873">
    <property type="entry name" value="AMP-dep_synth/lig_dom"/>
</dbReference>
<dbReference type="InterPro" id="IPR042099">
    <property type="entry name" value="ANL_N_sf"/>
</dbReference>
<dbReference type="NCBIfam" id="TIGR02188">
    <property type="entry name" value="Ac_CoA_lig_AcsA"/>
    <property type="match status" value="1"/>
</dbReference>
<dbReference type="NCBIfam" id="NF001208">
    <property type="entry name" value="PRK00174.1"/>
    <property type="match status" value="1"/>
</dbReference>
<dbReference type="PANTHER" id="PTHR24095">
    <property type="entry name" value="ACETYL-COENZYME A SYNTHETASE"/>
    <property type="match status" value="1"/>
</dbReference>
<dbReference type="PANTHER" id="PTHR24095:SF243">
    <property type="entry name" value="ACETYL-COENZYME A SYNTHETASE"/>
    <property type="match status" value="1"/>
</dbReference>
<dbReference type="Pfam" id="PF16177">
    <property type="entry name" value="ACAS_N"/>
    <property type="match status" value="1"/>
</dbReference>
<dbReference type="Pfam" id="PF00501">
    <property type="entry name" value="AMP-binding"/>
    <property type="match status" value="1"/>
</dbReference>
<dbReference type="Pfam" id="PF13193">
    <property type="entry name" value="AMP-binding_C"/>
    <property type="match status" value="1"/>
</dbReference>
<dbReference type="SUPFAM" id="SSF56801">
    <property type="entry name" value="Acetyl-CoA synthetase-like"/>
    <property type="match status" value="1"/>
</dbReference>
<dbReference type="PROSITE" id="PS00455">
    <property type="entry name" value="AMP_BINDING"/>
    <property type="match status" value="1"/>
</dbReference>
<reference key="1">
    <citation type="submission" date="2007-04" db="EMBL/GenBank/DDBJ databases">
        <title>Complete sequence of Shewanella putrefaciens CN-32.</title>
        <authorList>
            <consortium name="US DOE Joint Genome Institute"/>
            <person name="Copeland A."/>
            <person name="Lucas S."/>
            <person name="Lapidus A."/>
            <person name="Barry K."/>
            <person name="Detter J.C."/>
            <person name="Glavina del Rio T."/>
            <person name="Hammon N."/>
            <person name="Israni S."/>
            <person name="Dalin E."/>
            <person name="Tice H."/>
            <person name="Pitluck S."/>
            <person name="Chain P."/>
            <person name="Malfatti S."/>
            <person name="Shin M."/>
            <person name="Vergez L."/>
            <person name="Schmutz J."/>
            <person name="Larimer F."/>
            <person name="Land M."/>
            <person name="Hauser L."/>
            <person name="Kyrpides N."/>
            <person name="Mikhailova N."/>
            <person name="Romine M.F."/>
            <person name="Fredrickson J."/>
            <person name="Tiedje J."/>
            <person name="Richardson P."/>
        </authorList>
    </citation>
    <scope>NUCLEOTIDE SEQUENCE [LARGE SCALE GENOMIC DNA]</scope>
    <source>
        <strain>CN-32 / ATCC BAA-453</strain>
    </source>
</reference>
<proteinExistence type="inferred from homology"/>
<sequence length="650" mass="72390">MSSQSLYKVSGNIAANALVNNEQYKTMYQESIVNPEGFWREHGKRIDWIKPYTKIKKTSFDDHNLSINWFYDGTLNASANCLDRHLSEHSDRVAIIWEGDNASEQRKITYGELHADVCKFANALRSQGVRRGDIVTIYMPMVPEAAVAMLACARIGAVHSVVFGGFSPDSIASRVIDGKSKVVITSDEGMRGGRAIPLKRNIDDALNHPDVTSVEKVIVLKRTGGKIDWVEGRDVWWHSLLETASEHCQPEEMGAEDPLFLLYTSGSTGNPKGVLHTTGGYMVYASMTHEYVFDYKAGEVYWCTADVGWITGHSYMVYGPLANGATVLIHEGVPNHPSPARLGEMIDRHKVNILYTAPTLIRALMAEGKQHFDQFDGSTLRIMGSVGEPINPEAWRWYHEVIGHEHCPIVDTWWQTETGGILITPLPGATDTKPGSATRPFFGVQPALVDNMGNILEGENEGNLVLLDSWPGQMRTVYGDHERFVLTYFKTFRGMYFTGDGARRDEDGYYWITGRVDDVINVSGHRLGTAEVESALVSHELVAEAAVVGYPHDIKGQGIYAYVTLTRGTEESEELRQELRQWVRKEIGALATPDLIQWASGLPKTRSGKIMRRFLRKIAANEVTNLGDASTLADPAVIETLIETRLNRTE</sequence>
<comment type="function">
    <text evidence="1">Catalyzes the conversion of acetate into acetyl-CoA (AcCoA), an essential intermediate at the junction of anabolic and catabolic pathways. AcsA undergoes a two-step reaction. In the first half reaction, AcsA combines acetate with ATP to form acetyl-adenylate (AcAMP) intermediate. In the second half reaction, it can then transfer the acetyl group from AcAMP to the sulfhydryl group of CoA, forming the product AcCoA.</text>
</comment>
<comment type="catalytic activity">
    <reaction evidence="1">
        <text>acetate + ATP + CoA = acetyl-CoA + AMP + diphosphate</text>
        <dbReference type="Rhea" id="RHEA:23176"/>
        <dbReference type="ChEBI" id="CHEBI:30089"/>
        <dbReference type="ChEBI" id="CHEBI:30616"/>
        <dbReference type="ChEBI" id="CHEBI:33019"/>
        <dbReference type="ChEBI" id="CHEBI:57287"/>
        <dbReference type="ChEBI" id="CHEBI:57288"/>
        <dbReference type="ChEBI" id="CHEBI:456215"/>
        <dbReference type="EC" id="6.2.1.1"/>
    </reaction>
</comment>
<comment type="cofactor">
    <cofactor evidence="1">
        <name>Mg(2+)</name>
        <dbReference type="ChEBI" id="CHEBI:18420"/>
    </cofactor>
</comment>
<comment type="PTM">
    <text evidence="1">Acetylated. Deacetylation by the SIR2-homolog deacetylase activates the enzyme.</text>
</comment>
<comment type="similarity">
    <text evidence="1">Belongs to the ATP-dependent AMP-binding enzyme family.</text>
</comment>
<accession>A4Y7Y7</accession>